<protein>
    <recommendedName>
        <fullName evidence="1">Tol-Pal system protein TolB</fullName>
    </recommendedName>
</protein>
<reference key="1">
    <citation type="submission" date="2006-08" db="EMBL/GenBank/DDBJ databases">
        <title>Complete sequence of Alkalilimnicola ehrilichei MLHE-1.</title>
        <authorList>
            <person name="Copeland A."/>
            <person name="Lucas S."/>
            <person name="Lapidus A."/>
            <person name="Barry K."/>
            <person name="Detter J.C."/>
            <person name="Glavina del Rio T."/>
            <person name="Hammon N."/>
            <person name="Israni S."/>
            <person name="Dalin E."/>
            <person name="Tice H."/>
            <person name="Pitluck S."/>
            <person name="Sims D."/>
            <person name="Brettin T."/>
            <person name="Bruce D."/>
            <person name="Han C."/>
            <person name="Tapia R."/>
            <person name="Gilna P."/>
            <person name="Schmutz J."/>
            <person name="Larimer F."/>
            <person name="Land M."/>
            <person name="Hauser L."/>
            <person name="Kyrpides N."/>
            <person name="Mikhailova N."/>
            <person name="Oremland R.S."/>
            <person name="Hoeft S.E."/>
            <person name="Switzer-Blum J."/>
            <person name="Kulp T."/>
            <person name="King G."/>
            <person name="Tabita R."/>
            <person name="Witte B."/>
            <person name="Santini J.M."/>
            <person name="Basu P."/>
            <person name="Hollibaugh J.T."/>
            <person name="Xie G."/>
            <person name="Stolz J.F."/>
            <person name="Richardson P."/>
        </authorList>
    </citation>
    <scope>NUCLEOTIDE SEQUENCE [LARGE SCALE GENOMIC DNA]</scope>
    <source>
        <strain>ATCC BAA-1101 / DSM 17681 / MLHE-1</strain>
    </source>
</reference>
<dbReference type="EMBL" id="CP000453">
    <property type="protein sequence ID" value="ABI55597.1"/>
    <property type="molecule type" value="Genomic_DNA"/>
</dbReference>
<dbReference type="RefSeq" id="WP_011627993.1">
    <property type="nucleotide sequence ID" value="NC_008340.1"/>
</dbReference>
<dbReference type="SMR" id="Q0AC40"/>
<dbReference type="KEGG" id="aeh:Mlg_0242"/>
<dbReference type="eggNOG" id="COG0823">
    <property type="taxonomic scope" value="Bacteria"/>
</dbReference>
<dbReference type="HOGENOM" id="CLU_047123_0_0_6"/>
<dbReference type="OrthoDB" id="9802240at2"/>
<dbReference type="Proteomes" id="UP000001962">
    <property type="component" value="Chromosome"/>
</dbReference>
<dbReference type="GO" id="GO:0042597">
    <property type="term" value="C:periplasmic space"/>
    <property type="evidence" value="ECO:0007669"/>
    <property type="project" value="UniProtKB-SubCell"/>
</dbReference>
<dbReference type="GO" id="GO:0051301">
    <property type="term" value="P:cell division"/>
    <property type="evidence" value="ECO:0007669"/>
    <property type="project" value="UniProtKB-UniRule"/>
</dbReference>
<dbReference type="GO" id="GO:0017038">
    <property type="term" value="P:protein import"/>
    <property type="evidence" value="ECO:0007669"/>
    <property type="project" value="InterPro"/>
</dbReference>
<dbReference type="Gene3D" id="2.120.10.30">
    <property type="entry name" value="TolB, C-terminal domain"/>
    <property type="match status" value="1"/>
</dbReference>
<dbReference type="Gene3D" id="3.40.50.10070">
    <property type="entry name" value="TolB, N-terminal domain"/>
    <property type="match status" value="1"/>
</dbReference>
<dbReference type="HAMAP" id="MF_00671">
    <property type="entry name" value="TolB"/>
    <property type="match status" value="1"/>
</dbReference>
<dbReference type="InterPro" id="IPR011042">
    <property type="entry name" value="6-blade_b-propeller_TolB-like"/>
</dbReference>
<dbReference type="InterPro" id="IPR011659">
    <property type="entry name" value="PD40"/>
</dbReference>
<dbReference type="InterPro" id="IPR014167">
    <property type="entry name" value="Tol-Pal_TolB"/>
</dbReference>
<dbReference type="InterPro" id="IPR007195">
    <property type="entry name" value="TolB_N"/>
</dbReference>
<dbReference type="NCBIfam" id="TIGR02800">
    <property type="entry name" value="propeller_TolB"/>
    <property type="match status" value="1"/>
</dbReference>
<dbReference type="PANTHER" id="PTHR36842:SF1">
    <property type="entry name" value="PROTEIN TOLB"/>
    <property type="match status" value="1"/>
</dbReference>
<dbReference type="PANTHER" id="PTHR36842">
    <property type="entry name" value="PROTEIN TOLB HOMOLOG"/>
    <property type="match status" value="1"/>
</dbReference>
<dbReference type="Pfam" id="PF07676">
    <property type="entry name" value="PD40"/>
    <property type="match status" value="5"/>
</dbReference>
<dbReference type="Pfam" id="PF04052">
    <property type="entry name" value="TolB_N"/>
    <property type="match status" value="1"/>
</dbReference>
<dbReference type="SUPFAM" id="SSF52964">
    <property type="entry name" value="TolB, N-terminal domain"/>
    <property type="match status" value="1"/>
</dbReference>
<dbReference type="SUPFAM" id="SSF69304">
    <property type="entry name" value="Tricorn protease N-terminal domain"/>
    <property type="match status" value="1"/>
</dbReference>
<keyword id="KW-0131">Cell cycle</keyword>
<keyword id="KW-0132">Cell division</keyword>
<keyword id="KW-0574">Periplasm</keyword>
<keyword id="KW-1185">Reference proteome</keyword>
<keyword id="KW-0732">Signal</keyword>
<organism>
    <name type="scientific">Alkalilimnicola ehrlichii (strain ATCC BAA-1101 / DSM 17681 / MLHE-1)</name>
    <dbReference type="NCBI Taxonomy" id="187272"/>
    <lineage>
        <taxon>Bacteria</taxon>
        <taxon>Pseudomonadati</taxon>
        <taxon>Pseudomonadota</taxon>
        <taxon>Gammaproteobacteria</taxon>
        <taxon>Chromatiales</taxon>
        <taxon>Ectothiorhodospiraceae</taxon>
        <taxon>Alkalilimnicola</taxon>
    </lineage>
</organism>
<feature type="signal peptide" evidence="1">
    <location>
        <begin position="1"/>
        <end position="23"/>
    </location>
</feature>
<feature type="chain" id="PRO_5000132654" description="Tol-Pal system protein TolB" evidence="1">
    <location>
        <begin position="24"/>
        <end position="428"/>
    </location>
</feature>
<name>TOLB_ALKEH</name>
<proteinExistence type="inferred from homology"/>
<gene>
    <name evidence="1" type="primary">tolB</name>
    <name type="ordered locus">Mlg_0242</name>
</gene>
<evidence type="ECO:0000255" key="1">
    <source>
        <dbReference type="HAMAP-Rule" id="MF_00671"/>
    </source>
</evidence>
<accession>Q0AC40</accession>
<sequence>MRRLYQTVCTLALLLVGLQAAHADDIIDVIGGQEGAMPVAVIPFAVTGEIPTPDQDIARVISDNLARSGRFEVLPREELVARPAGLDDTRFSAWRALGMDYLVTGRMEMDGHRVSVTFELLDVFRGNRIEGRRYRLHPDNLRSLAHAISDIVFEEVVGLPGVFGTQIAYVQVEERNDQRIHRLMVADADGQRPREILESRQPIMSPAWSPERDRLAYVSFEGGRSEIYVQNLRSGQRDRIASFRGINSAPAWSPDGRHLAVTLSRDGRANIYLLRLDDGHVRRLTDHWAIDTEPTFSPDGERIAFTSDRGGRPQVYTLAVNGPGGVERVTFDGDYNARPNWSPDGRRIAMVHRHNGSFRIAVHDLESDRTRVLTDGPWDESPVFAPNGDMIMYSAGGSGDSRLRTVSVHGRANQALPRAGGLTREPAW</sequence>
<comment type="function">
    <text evidence="1">Part of the Tol-Pal system, which plays a role in outer membrane invagination during cell division and is important for maintaining outer membrane integrity.</text>
</comment>
<comment type="subunit">
    <text evidence="1">The Tol-Pal system is composed of five core proteins: the inner membrane proteins TolA, TolQ and TolR, the periplasmic protein TolB and the outer membrane protein Pal. They form a network linking the inner and outer membranes and the peptidoglycan layer.</text>
</comment>
<comment type="subcellular location">
    <subcellularLocation>
        <location evidence="1">Periplasm</location>
    </subcellularLocation>
</comment>
<comment type="similarity">
    <text evidence="1">Belongs to the TolB family.</text>
</comment>